<feature type="chain" id="PRO_0000068548" description="Aminoglycoside N(3)-acetyltransferase IV">
    <location>
        <begin position="1"/>
        <end position="261"/>
    </location>
</feature>
<protein>
    <recommendedName>
        <fullName>Aminoglycoside N(3)-acetyltransferase IV</fullName>
        <ecNumber>2.3.1.81</ecNumber>
    </recommendedName>
    <alternativeName>
        <fullName>ACC(3)-IV</fullName>
    </alternativeName>
    <alternativeName>
        <fullName>Aminocyclitol 3-N-acetyltransferase type IV</fullName>
    </alternativeName>
</protein>
<organism>
    <name type="scientific">Salmonella sp</name>
    <dbReference type="NCBI Taxonomy" id="599"/>
    <lineage>
        <taxon>Bacteria</taxon>
        <taxon>Pseudomonadati</taxon>
        <taxon>Pseudomonadota</taxon>
        <taxon>Gammaproteobacteria</taxon>
        <taxon>Enterobacterales</taxon>
        <taxon>Enterobacteriaceae</taxon>
        <taxon>Salmonella</taxon>
    </lineage>
</organism>
<gene>
    <name type="primary">aacC4</name>
</gene>
<evidence type="ECO:0000305" key="1"/>
<reference key="1">
    <citation type="journal article" date="1984" name="Mol. Gen. Genet.">
        <title>Genes for gentamicin-(3)-N-acetyltransferases III and IV: I. Nucleotide sequence of the AAC(3)-IV gene and possible involvement of an IS140 element in its expression.</title>
        <authorList>
            <person name="Braeu B."/>
            <person name="Pilz U."/>
            <person name="Piepersberg W."/>
        </authorList>
    </citation>
    <scope>NUCLEOTIDE SEQUENCE [GENOMIC DNA]</scope>
</reference>
<reference key="2">
    <citation type="submission" date="1985-09" db="EMBL/GenBank/DDBJ databases">
        <authorList>
            <person name="Piepersberg W."/>
        </authorList>
    </citation>
    <scope>SEQUENCE REVISION</scope>
</reference>
<name>AACC4_SALSP</name>
<keyword id="KW-0012">Acyltransferase</keyword>
<keyword id="KW-0046">Antibiotic resistance</keyword>
<keyword id="KW-0614">Plasmid</keyword>
<keyword id="KW-0808">Transferase</keyword>
<sequence>MQYEWRKAELIGQLLNLGVTPGGVLLVHSSFRSVRPLEDGPLGLIEALRAALGPGGTLVMPSWSGLDDEPFDPATSPVTPDLGVVSDTFWRLPNVKRSAHPFAFAAAGPQAEQIISDPLPLPPHSPASPVARVHELDGQVLLLGVGHDANTTLHLAELMAKVPYGVPRHCTILQDGKLVRVDYLENDHCCERFALADRWLKEKSLQKEGPVGHAFARLIRSRDIVATALGQLGRDPLIFLHPPEGGMRRMRCRSPVDWLSS</sequence>
<proteinExistence type="inferred from homology"/>
<dbReference type="EC" id="2.3.1.81"/>
<dbReference type="EMBL" id="X01385">
    <property type="protein sequence ID" value="CAA25642.1"/>
    <property type="molecule type" value="Genomic_DNA"/>
</dbReference>
<dbReference type="PIR" id="S09647">
    <property type="entry name" value="S09647"/>
</dbReference>
<dbReference type="SMR" id="P08988"/>
<dbReference type="KEGG" id="ag:CAA25642"/>
<dbReference type="GO" id="GO:0046353">
    <property type="term" value="F:aminoglycoside 3-N-acetyltransferase activity"/>
    <property type="evidence" value="ECO:0007669"/>
    <property type="project" value="UniProtKB-EC"/>
</dbReference>
<dbReference type="GO" id="GO:0046677">
    <property type="term" value="P:response to antibiotic"/>
    <property type="evidence" value="ECO:0007669"/>
    <property type="project" value="UniProtKB-KW"/>
</dbReference>
<dbReference type="InterPro" id="IPR003679">
    <property type="entry name" value="Amioglycoside_AcTrfase"/>
</dbReference>
<dbReference type="InterPro" id="IPR028345">
    <property type="entry name" value="Antibiotic_NAT-like"/>
</dbReference>
<dbReference type="NCBIfam" id="NF033081">
    <property type="entry name" value="AAC_3_IV"/>
    <property type="match status" value="1"/>
</dbReference>
<dbReference type="PANTHER" id="PTHR11104">
    <property type="entry name" value="AMINOGLYCOSIDE N3-ACETYLTRANSFERASE"/>
    <property type="match status" value="1"/>
</dbReference>
<dbReference type="PANTHER" id="PTHR11104:SF0">
    <property type="entry name" value="SPBETA PROPHAGE-DERIVED AMINOGLYCOSIDE N(3')-ACETYLTRANSFERASE-LIKE PROTEIN YOKD"/>
    <property type="match status" value="1"/>
</dbReference>
<dbReference type="Pfam" id="PF02522">
    <property type="entry name" value="Antibiotic_NAT"/>
    <property type="match status" value="1"/>
</dbReference>
<dbReference type="SUPFAM" id="SSF110710">
    <property type="entry name" value="TTHA0583/YokD-like"/>
    <property type="match status" value="1"/>
</dbReference>
<accession>P08988</accession>
<comment type="function">
    <text>Resistance to antibiotics containing the 2-deoxy-streptamine ring including gentamicin, kanamycin, tobramycin, neomycin and apramycin.</text>
</comment>
<comment type="catalytic activity">
    <reaction>
        <text>a 2-deoxystreptamine antibiotic + acetyl-CoA = an N(3)-acetyl-2-deoxystreptamine antibiotic + CoA + H(+)</text>
        <dbReference type="Rhea" id="RHEA:12665"/>
        <dbReference type="ChEBI" id="CHEBI:15378"/>
        <dbReference type="ChEBI" id="CHEBI:57287"/>
        <dbReference type="ChEBI" id="CHEBI:57288"/>
        <dbReference type="ChEBI" id="CHEBI:57921"/>
        <dbReference type="ChEBI" id="CHEBI:77452"/>
        <dbReference type="EC" id="2.3.1.81"/>
    </reaction>
</comment>
<comment type="similarity">
    <text evidence="1">Belongs to the antibiotic N-acetyltransferase family.</text>
</comment>
<geneLocation type="plasmid">
    <name>pWP7b</name>
</geneLocation>